<comment type="function">
    <text evidence="1">Catalyzes the isomerization between 2-isopropylmalate and 3-isopropylmalate, via the formation of 2-isopropylmaleate.</text>
</comment>
<comment type="catalytic activity">
    <reaction evidence="1">
        <text>(2R,3S)-3-isopropylmalate = (2S)-2-isopropylmalate</text>
        <dbReference type="Rhea" id="RHEA:32287"/>
        <dbReference type="ChEBI" id="CHEBI:1178"/>
        <dbReference type="ChEBI" id="CHEBI:35121"/>
        <dbReference type="EC" id="4.2.1.33"/>
    </reaction>
</comment>
<comment type="cofactor">
    <cofactor evidence="1">
        <name>[4Fe-4S] cluster</name>
        <dbReference type="ChEBI" id="CHEBI:49883"/>
    </cofactor>
    <text evidence="1">Binds 1 [4Fe-4S] cluster per subunit.</text>
</comment>
<comment type="pathway">
    <text evidence="1">Amino-acid biosynthesis; L-leucine biosynthesis; L-leucine from 3-methyl-2-oxobutanoate: step 2/4.</text>
</comment>
<comment type="subunit">
    <text evidence="1">Heterodimer of LeuC and LeuD.</text>
</comment>
<comment type="similarity">
    <text evidence="1">Belongs to the aconitase/IPM isomerase family. LeuC type 2 subfamily.</text>
</comment>
<sequence length="420" mass="45100">MGMTITEKILCRHTDLDEVRPGMLINAKVDIALGNDVTAPLAIDEFRKAGGKKVFDRDKVVLIPDHFTPNKDINSAAQCKIMRDFAREQEITHYYEVGEVGVEHALLPEKGIVLPGDLVIGADSHTCTYGALGAFATGVGSTDLAAAMLTGEVWFKVPESIRFVLSGTLNPWVSGKDLILYIIGKIGVDGALYKAMEFTGDTIASLTMADRFTIANMAIEAGGKNGIFTPDEITEAYVKPRAKRPYTFYASDPDAAYAQVIEIDVNRIEPQVAFPHLPSNTKGISEVGQVPLDQVVIGSCTNGRIEDLRAAAAVLKGRKADPRVRLIVIPATQEIYRMAMKEGLFDIFLDANAAISTPTCGPCLGGHMGILAAGERALATTNRNFVGRMGHPRSEVYLSNPAVAAASAVLGRIAGPDELK</sequence>
<dbReference type="EC" id="4.2.1.33" evidence="1"/>
<dbReference type="EMBL" id="CP000252">
    <property type="protein sequence ID" value="ABC78450.1"/>
    <property type="molecule type" value="Genomic_DNA"/>
</dbReference>
<dbReference type="RefSeq" id="WP_011418469.1">
    <property type="nucleotide sequence ID" value="NC_007759.1"/>
</dbReference>
<dbReference type="SMR" id="Q2LWJ2"/>
<dbReference type="FunCoup" id="Q2LWJ2">
    <property type="interactions" value="452"/>
</dbReference>
<dbReference type="STRING" id="56780.SYN_00091"/>
<dbReference type="KEGG" id="sat:SYN_00091"/>
<dbReference type="eggNOG" id="COG0065">
    <property type="taxonomic scope" value="Bacteria"/>
</dbReference>
<dbReference type="HOGENOM" id="CLU_006714_3_4_7"/>
<dbReference type="InParanoid" id="Q2LWJ2"/>
<dbReference type="OrthoDB" id="9764318at2"/>
<dbReference type="UniPathway" id="UPA00048">
    <property type="reaction ID" value="UER00071"/>
</dbReference>
<dbReference type="Proteomes" id="UP000001933">
    <property type="component" value="Chromosome"/>
</dbReference>
<dbReference type="GO" id="GO:0003861">
    <property type="term" value="F:3-isopropylmalate dehydratase activity"/>
    <property type="evidence" value="ECO:0007669"/>
    <property type="project" value="UniProtKB-UniRule"/>
</dbReference>
<dbReference type="GO" id="GO:0051539">
    <property type="term" value="F:4 iron, 4 sulfur cluster binding"/>
    <property type="evidence" value="ECO:0007669"/>
    <property type="project" value="UniProtKB-KW"/>
</dbReference>
<dbReference type="GO" id="GO:0046872">
    <property type="term" value="F:metal ion binding"/>
    <property type="evidence" value="ECO:0007669"/>
    <property type="project" value="UniProtKB-KW"/>
</dbReference>
<dbReference type="GO" id="GO:0009098">
    <property type="term" value="P:L-leucine biosynthetic process"/>
    <property type="evidence" value="ECO:0007669"/>
    <property type="project" value="UniProtKB-UniRule"/>
</dbReference>
<dbReference type="CDD" id="cd01583">
    <property type="entry name" value="IPMI"/>
    <property type="match status" value="1"/>
</dbReference>
<dbReference type="Gene3D" id="3.30.499.10">
    <property type="entry name" value="Aconitase, domain 3"/>
    <property type="match status" value="2"/>
</dbReference>
<dbReference type="HAMAP" id="MF_01027">
    <property type="entry name" value="LeuC_type2"/>
    <property type="match status" value="1"/>
</dbReference>
<dbReference type="InterPro" id="IPR015931">
    <property type="entry name" value="Acnase/IPM_dHydase_lsu_aba_1/3"/>
</dbReference>
<dbReference type="InterPro" id="IPR001030">
    <property type="entry name" value="Acoase/IPM_deHydtase_lsu_aba"/>
</dbReference>
<dbReference type="InterPro" id="IPR018136">
    <property type="entry name" value="Aconitase_4Fe-4S_BS"/>
</dbReference>
<dbReference type="InterPro" id="IPR036008">
    <property type="entry name" value="Aconitase_4Fe-4S_dom"/>
</dbReference>
<dbReference type="InterPro" id="IPR011826">
    <property type="entry name" value="HAcnase/IPMdehydase_lsu_prok"/>
</dbReference>
<dbReference type="InterPro" id="IPR006251">
    <property type="entry name" value="Homoacnase/IPMdehydase_lsu"/>
</dbReference>
<dbReference type="InterPro" id="IPR050067">
    <property type="entry name" value="IPM_dehydratase_rel_enz"/>
</dbReference>
<dbReference type="InterPro" id="IPR033941">
    <property type="entry name" value="IPMI_cat"/>
</dbReference>
<dbReference type="InterPro" id="IPR011823">
    <property type="entry name" value="IsopropMal_deHydtase_lsu_bac"/>
</dbReference>
<dbReference type="NCBIfam" id="TIGR01343">
    <property type="entry name" value="hacA_fam"/>
    <property type="match status" value="1"/>
</dbReference>
<dbReference type="NCBIfam" id="TIGR02086">
    <property type="entry name" value="IPMI_arch"/>
    <property type="match status" value="1"/>
</dbReference>
<dbReference type="NCBIfam" id="TIGR02083">
    <property type="entry name" value="LEU2"/>
    <property type="match status" value="1"/>
</dbReference>
<dbReference type="NCBIfam" id="NF001614">
    <property type="entry name" value="PRK00402.1"/>
    <property type="match status" value="1"/>
</dbReference>
<dbReference type="PANTHER" id="PTHR43822:SF16">
    <property type="entry name" value="3-ISOPROPYLMALATE DEHYDRATASE LARGE SUBUNIT 2"/>
    <property type="match status" value="1"/>
</dbReference>
<dbReference type="PANTHER" id="PTHR43822">
    <property type="entry name" value="HOMOACONITASE, MITOCHONDRIAL-RELATED"/>
    <property type="match status" value="1"/>
</dbReference>
<dbReference type="Pfam" id="PF00330">
    <property type="entry name" value="Aconitase"/>
    <property type="match status" value="1"/>
</dbReference>
<dbReference type="PRINTS" id="PR00415">
    <property type="entry name" value="ACONITASE"/>
</dbReference>
<dbReference type="SUPFAM" id="SSF53732">
    <property type="entry name" value="Aconitase iron-sulfur domain"/>
    <property type="match status" value="1"/>
</dbReference>
<dbReference type="PROSITE" id="PS00450">
    <property type="entry name" value="ACONITASE_1"/>
    <property type="match status" value="1"/>
</dbReference>
<name>LEUC_SYNAS</name>
<evidence type="ECO:0000255" key="1">
    <source>
        <dbReference type="HAMAP-Rule" id="MF_01027"/>
    </source>
</evidence>
<keyword id="KW-0004">4Fe-4S</keyword>
<keyword id="KW-0028">Amino-acid biosynthesis</keyword>
<keyword id="KW-0100">Branched-chain amino acid biosynthesis</keyword>
<keyword id="KW-0408">Iron</keyword>
<keyword id="KW-0411">Iron-sulfur</keyword>
<keyword id="KW-0432">Leucine biosynthesis</keyword>
<keyword id="KW-0456">Lyase</keyword>
<keyword id="KW-0479">Metal-binding</keyword>
<keyword id="KW-1185">Reference proteome</keyword>
<feature type="chain" id="PRO_1000063656" description="3-isopropylmalate dehydratase large subunit">
    <location>
        <begin position="1"/>
        <end position="420"/>
    </location>
</feature>
<feature type="binding site" evidence="1">
    <location>
        <position position="300"/>
    </location>
    <ligand>
        <name>[4Fe-4S] cluster</name>
        <dbReference type="ChEBI" id="CHEBI:49883"/>
    </ligand>
</feature>
<feature type="binding site" evidence="1">
    <location>
        <position position="360"/>
    </location>
    <ligand>
        <name>[4Fe-4S] cluster</name>
        <dbReference type="ChEBI" id="CHEBI:49883"/>
    </ligand>
</feature>
<feature type="binding site" evidence="1">
    <location>
        <position position="363"/>
    </location>
    <ligand>
        <name>[4Fe-4S] cluster</name>
        <dbReference type="ChEBI" id="CHEBI:49883"/>
    </ligand>
</feature>
<protein>
    <recommendedName>
        <fullName evidence="1">3-isopropylmalate dehydratase large subunit</fullName>
        <ecNumber evidence="1">4.2.1.33</ecNumber>
    </recommendedName>
    <alternativeName>
        <fullName evidence="1">Alpha-IPM isomerase</fullName>
        <shortName evidence="1">IPMI</shortName>
    </alternativeName>
    <alternativeName>
        <fullName evidence="1">Isopropylmalate isomerase</fullName>
    </alternativeName>
</protein>
<gene>
    <name evidence="1" type="primary">leuC</name>
    <name type="ordered locus">SYNAS_25710</name>
    <name type="ORF">SYN_00091</name>
</gene>
<accession>Q2LWJ2</accession>
<reference key="1">
    <citation type="journal article" date="2007" name="Proc. Natl. Acad. Sci. U.S.A.">
        <title>The genome of Syntrophus aciditrophicus: life at the thermodynamic limit of microbial growth.</title>
        <authorList>
            <person name="McInerney M.J."/>
            <person name="Rohlin L."/>
            <person name="Mouttaki H."/>
            <person name="Kim U."/>
            <person name="Krupp R.S."/>
            <person name="Rios-Hernandez L."/>
            <person name="Sieber J."/>
            <person name="Struchtemeyer C.G."/>
            <person name="Bhattacharyya A."/>
            <person name="Campbell J.W."/>
            <person name="Gunsalus R.P."/>
        </authorList>
    </citation>
    <scope>NUCLEOTIDE SEQUENCE [LARGE SCALE GENOMIC DNA]</scope>
    <source>
        <strain>SB</strain>
    </source>
</reference>
<proteinExistence type="inferred from homology"/>
<organism>
    <name type="scientific">Syntrophus aciditrophicus (strain SB)</name>
    <dbReference type="NCBI Taxonomy" id="56780"/>
    <lineage>
        <taxon>Bacteria</taxon>
        <taxon>Pseudomonadati</taxon>
        <taxon>Thermodesulfobacteriota</taxon>
        <taxon>Syntrophia</taxon>
        <taxon>Syntrophales</taxon>
        <taxon>Syntrophaceae</taxon>
        <taxon>Syntrophus</taxon>
    </lineage>
</organism>